<accession>A1RLT1</accession>
<sequence length="304" mass="33591">MWFKNLTLYRFNKPFAVETEALETALADFTFSPCSSQDISKFGFSNALGKKGSSLVHSANNRHLICATKEEKMLPGQVIKEALEEKVALIEDEENRKLAKKEKDALKDEIITSLLPRAFSRRSQTRALILPELEMILVDSSSATKAEELLALLRKALGSLPVIPLSFKAPVESHLTEWLKNGSAPLPFEMQDEAELKSEADEGGIVRFKQQDLKEDEVLAHLATGKQVHKLALHFGQSIALLLQSDASVKRLKFSEEFRAGNDEVGTDDPMARLDADFALMGSELVALMHALVSALGGLEETQD</sequence>
<organism>
    <name type="scientific">Shewanella sp. (strain W3-18-1)</name>
    <dbReference type="NCBI Taxonomy" id="351745"/>
    <lineage>
        <taxon>Bacteria</taxon>
        <taxon>Pseudomonadati</taxon>
        <taxon>Pseudomonadota</taxon>
        <taxon>Gammaproteobacteria</taxon>
        <taxon>Alteromonadales</taxon>
        <taxon>Shewanellaceae</taxon>
        <taxon>Shewanella</taxon>
    </lineage>
</organism>
<name>RDGC_SHESW</name>
<evidence type="ECO:0000255" key="1">
    <source>
        <dbReference type="HAMAP-Rule" id="MF_00194"/>
    </source>
</evidence>
<dbReference type="EMBL" id="CP000503">
    <property type="protein sequence ID" value="ABM25626.1"/>
    <property type="molecule type" value="Genomic_DNA"/>
</dbReference>
<dbReference type="RefSeq" id="WP_011790081.1">
    <property type="nucleotide sequence ID" value="NC_008750.1"/>
</dbReference>
<dbReference type="SMR" id="A1RLT1"/>
<dbReference type="KEGG" id="shw:Sputw3181_2809"/>
<dbReference type="HOGENOM" id="CLU_052038_1_1_6"/>
<dbReference type="Proteomes" id="UP000002597">
    <property type="component" value="Chromosome"/>
</dbReference>
<dbReference type="GO" id="GO:0043590">
    <property type="term" value="C:bacterial nucleoid"/>
    <property type="evidence" value="ECO:0007669"/>
    <property type="project" value="TreeGrafter"/>
</dbReference>
<dbReference type="GO" id="GO:0005737">
    <property type="term" value="C:cytoplasm"/>
    <property type="evidence" value="ECO:0007669"/>
    <property type="project" value="UniProtKB-UniRule"/>
</dbReference>
<dbReference type="GO" id="GO:0003690">
    <property type="term" value="F:double-stranded DNA binding"/>
    <property type="evidence" value="ECO:0007669"/>
    <property type="project" value="TreeGrafter"/>
</dbReference>
<dbReference type="GO" id="GO:0006310">
    <property type="term" value="P:DNA recombination"/>
    <property type="evidence" value="ECO:0007669"/>
    <property type="project" value="UniProtKB-UniRule"/>
</dbReference>
<dbReference type="GO" id="GO:0000018">
    <property type="term" value="P:regulation of DNA recombination"/>
    <property type="evidence" value="ECO:0007669"/>
    <property type="project" value="TreeGrafter"/>
</dbReference>
<dbReference type="HAMAP" id="MF_00194">
    <property type="entry name" value="RdgC"/>
    <property type="match status" value="1"/>
</dbReference>
<dbReference type="InterPro" id="IPR007476">
    <property type="entry name" value="RdgC"/>
</dbReference>
<dbReference type="NCBIfam" id="NF001462">
    <property type="entry name" value="PRK00321.1-3"/>
    <property type="match status" value="1"/>
</dbReference>
<dbReference type="NCBIfam" id="NF001464">
    <property type="entry name" value="PRK00321.1-5"/>
    <property type="match status" value="1"/>
</dbReference>
<dbReference type="PANTHER" id="PTHR38103">
    <property type="entry name" value="RECOMBINATION-ASSOCIATED PROTEIN RDGC"/>
    <property type="match status" value="1"/>
</dbReference>
<dbReference type="PANTHER" id="PTHR38103:SF1">
    <property type="entry name" value="RECOMBINATION-ASSOCIATED PROTEIN RDGC"/>
    <property type="match status" value="1"/>
</dbReference>
<dbReference type="Pfam" id="PF04381">
    <property type="entry name" value="RdgC"/>
    <property type="match status" value="1"/>
</dbReference>
<gene>
    <name evidence="1" type="primary">rdgC</name>
    <name type="ordered locus">Sputw3181_2809</name>
</gene>
<feature type="chain" id="PRO_1000021237" description="Recombination-associated protein RdgC">
    <location>
        <begin position="1"/>
        <end position="304"/>
    </location>
</feature>
<comment type="function">
    <text evidence="1">May be involved in recombination.</text>
</comment>
<comment type="subcellular location">
    <subcellularLocation>
        <location evidence="1">Cytoplasm</location>
        <location evidence="1">Nucleoid</location>
    </subcellularLocation>
</comment>
<comment type="similarity">
    <text evidence="1">Belongs to the RdgC family.</text>
</comment>
<reference key="1">
    <citation type="submission" date="2006-12" db="EMBL/GenBank/DDBJ databases">
        <title>Complete sequence of Shewanella sp. W3-18-1.</title>
        <authorList>
            <consortium name="US DOE Joint Genome Institute"/>
            <person name="Copeland A."/>
            <person name="Lucas S."/>
            <person name="Lapidus A."/>
            <person name="Barry K."/>
            <person name="Detter J.C."/>
            <person name="Glavina del Rio T."/>
            <person name="Hammon N."/>
            <person name="Israni S."/>
            <person name="Dalin E."/>
            <person name="Tice H."/>
            <person name="Pitluck S."/>
            <person name="Chain P."/>
            <person name="Malfatti S."/>
            <person name="Shin M."/>
            <person name="Vergez L."/>
            <person name="Schmutz J."/>
            <person name="Larimer F."/>
            <person name="Land M."/>
            <person name="Hauser L."/>
            <person name="Kyrpides N."/>
            <person name="Lykidis A."/>
            <person name="Tiedje J."/>
            <person name="Richardson P."/>
        </authorList>
    </citation>
    <scope>NUCLEOTIDE SEQUENCE [LARGE SCALE GENOMIC DNA]</scope>
    <source>
        <strain>W3-18-1</strain>
    </source>
</reference>
<protein>
    <recommendedName>
        <fullName evidence="1">Recombination-associated protein RdgC</fullName>
    </recommendedName>
</protein>
<keyword id="KW-0963">Cytoplasm</keyword>
<keyword id="KW-0233">DNA recombination</keyword>
<proteinExistence type="inferred from homology"/>